<organism>
    <name type="scientific">Brucella melitensis biotype 1 (strain ATCC 23456 / CCUG 17765 / NCTC 10094 / 16M)</name>
    <dbReference type="NCBI Taxonomy" id="224914"/>
    <lineage>
        <taxon>Bacteria</taxon>
        <taxon>Pseudomonadati</taxon>
        <taxon>Pseudomonadota</taxon>
        <taxon>Alphaproteobacteria</taxon>
        <taxon>Hyphomicrobiales</taxon>
        <taxon>Brucellaceae</taxon>
        <taxon>Brucella/Ochrobactrum group</taxon>
        <taxon>Brucella</taxon>
    </lineage>
</organism>
<dbReference type="EC" id="3.4.21.92" evidence="1"/>
<dbReference type="EMBL" id="AE008917">
    <property type="protein sequence ID" value="AAL52055.1"/>
    <property type="status" value="ALT_INIT"/>
    <property type="molecule type" value="Genomic_DNA"/>
</dbReference>
<dbReference type="PIR" id="AD3361">
    <property type="entry name" value="AD3361"/>
</dbReference>
<dbReference type="RefSeq" id="WP_004683830.1">
    <property type="nucleotide sequence ID" value="NZ_GG703780.1"/>
</dbReference>
<dbReference type="SMR" id="Q8YHC8"/>
<dbReference type="MEROPS" id="S14.001"/>
<dbReference type="GeneID" id="29593687"/>
<dbReference type="KEGG" id="bme:BMEI0874"/>
<dbReference type="KEGG" id="bmel:DK63_548"/>
<dbReference type="PATRIC" id="fig|224914.52.peg.570"/>
<dbReference type="eggNOG" id="COG0740">
    <property type="taxonomic scope" value="Bacteria"/>
</dbReference>
<dbReference type="PhylomeDB" id="Q8YHC8"/>
<dbReference type="Proteomes" id="UP000000419">
    <property type="component" value="Chromosome I"/>
</dbReference>
<dbReference type="GO" id="GO:0005737">
    <property type="term" value="C:cytoplasm"/>
    <property type="evidence" value="ECO:0007669"/>
    <property type="project" value="UniProtKB-SubCell"/>
</dbReference>
<dbReference type="GO" id="GO:0009368">
    <property type="term" value="C:endopeptidase Clp complex"/>
    <property type="evidence" value="ECO:0007669"/>
    <property type="project" value="TreeGrafter"/>
</dbReference>
<dbReference type="GO" id="GO:0004176">
    <property type="term" value="F:ATP-dependent peptidase activity"/>
    <property type="evidence" value="ECO:0007669"/>
    <property type="project" value="InterPro"/>
</dbReference>
<dbReference type="GO" id="GO:0051117">
    <property type="term" value="F:ATPase binding"/>
    <property type="evidence" value="ECO:0007669"/>
    <property type="project" value="TreeGrafter"/>
</dbReference>
<dbReference type="GO" id="GO:0004252">
    <property type="term" value="F:serine-type endopeptidase activity"/>
    <property type="evidence" value="ECO:0007669"/>
    <property type="project" value="UniProtKB-UniRule"/>
</dbReference>
<dbReference type="GO" id="GO:0006515">
    <property type="term" value="P:protein quality control for misfolded or incompletely synthesized proteins"/>
    <property type="evidence" value="ECO:0007669"/>
    <property type="project" value="TreeGrafter"/>
</dbReference>
<dbReference type="CDD" id="cd07017">
    <property type="entry name" value="S14_ClpP_2"/>
    <property type="match status" value="1"/>
</dbReference>
<dbReference type="FunFam" id="3.90.226.10:FF:000001">
    <property type="entry name" value="ATP-dependent Clp protease proteolytic subunit"/>
    <property type="match status" value="1"/>
</dbReference>
<dbReference type="Gene3D" id="3.90.226.10">
    <property type="entry name" value="2-enoyl-CoA Hydratase, Chain A, domain 1"/>
    <property type="match status" value="1"/>
</dbReference>
<dbReference type="HAMAP" id="MF_00444">
    <property type="entry name" value="ClpP"/>
    <property type="match status" value="1"/>
</dbReference>
<dbReference type="InterPro" id="IPR001907">
    <property type="entry name" value="ClpP"/>
</dbReference>
<dbReference type="InterPro" id="IPR029045">
    <property type="entry name" value="ClpP/crotonase-like_dom_sf"/>
</dbReference>
<dbReference type="InterPro" id="IPR023562">
    <property type="entry name" value="ClpP/TepA"/>
</dbReference>
<dbReference type="InterPro" id="IPR018215">
    <property type="entry name" value="ClpP_Ser_AS"/>
</dbReference>
<dbReference type="NCBIfam" id="NF001368">
    <property type="entry name" value="PRK00277.1"/>
    <property type="match status" value="1"/>
</dbReference>
<dbReference type="NCBIfam" id="NF009205">
    <property type="entry name" value="PRK12553.1"/>
    <property type="match status" value="1"/>
</dbReference>
<dbReference type="PANTHER" id="PTHR10381">
    <property type="entry name" value="ATP-DEPENDENT CLP PROTEASE PROTEOLYTIC SUBUNIT"/>
    <property type="match status" value="1"/>
</dbReference>
<dbReference type="PANTHER" id="PTHR10381:SF70">
    <property type="entry name" value="ATP-DEPENDENT CLP PROTEASE PROTEOLYTIC SUBUNIT"/>
    <property type="match status" value="1"/>
</dbReference>
<dbReference type="Pfam" id="PF00574">
    <property type="entry name" value="CLP_protease"/>
    <property type="match status" value="1"/>
</dbReference>
<dbReference type="PRINTS" id="PR00127">
    <property type="entry name" value="CLPPROTEASEP"/>
</dbReference>
<dbReference type="SUPFAM" id="SSF52096">
    <property type="entry name" value="ClpP/crotonase"/>
    <property type="match status" value="1"/>
</dbReference>
<dbReference type="PROSITE" id="PS00381">
    <property type="entry name" value="CLP_PROTEASE_SER"/>
    <property type="match status" value="1"/>
</dbReference>
<feature type="chain" id="PRO_0000179517" description="ATP-dependent Clp protease proteolytic subunit">
    <location>
        <begin position="1"/>
        <end position="209"/>
    </location>
</feature>
<feature type="active site" description="Nucleophile" evidence="1">
    <location>
        <position position="106"/>
    </location>
</feature>
<feature type="active site" evidence="1">
    <location>
        <position position="131"/>
    </location>
</feature>
<gene>
    <name evidence="1" type="primary">clpP</name>
    <name type="ordered locus">BMEI0874</name>
</gene>
<sequence>MRDPIETVMNLVPMVVEQTNRGERAYDIFSRLLKERIIFVNGPVEDGMSMLVCAQLLFLEAENPKKEINMYINSPGGVVTSGMAIYDTMQFIRPPVSTLCMGQAASMGSLLLTAGATGHRYALLNARIMVHQPSGGFQGQASDIERHAQDIIKMKRRLNEIYVKHTGRDYDTIERTLDRDHFMTAQEALEFGLIDKVVEARDVSADESK</sequence>
<accession>Q8YHC8</accession>
<comment type="function">
    <text evidence="1">Cleaves peptides in various proteins in a process that requires ATP hydrolysis. Has a chymotrypsin-like activity. Plays a major role in the degradation of misfolded proteins.</text>
</comment>
<comment type="catalytic activity">
    <reaction evidence="1">
        <text>Hydrolysis of proteins to small peptides in the presence of ATP and magnesium. alpha-casein is the usual test substrate. In the absence of ATP, only oligopeptides shorter than five residues are hydrolyzed (such as succinyl-Leu-Tyr-|-NHMec, and Leu-Tyr-Leu-|-Tyr-Trp, in which cleavage of the -Tyr-|-Leu- and -Tyr-|-Trp bonds also occurs).</text>
        <dbReference type="EC" id="3.4.21.92"/>
    </reaction>
</comment>
<comment type="subunit">
    <text evidence="1">Fourteen ClpP subunits assemble into 2 heptameric rings which stack back to back to give a disk-like structure with a central cavity, resembling the structure of eukaryotic proteasomes.</text>
</comment>
<comment type="subcellular location">
    <subcellularLocation>
        <location evidence="1">Cytoplasm</location>
    </subcellularLocation>
</comment>
<comment type="similarity">
    <text evidence="1">Belongs to the peptidase S14 family.</text>
</comment>
<comment type="sequence caution" evidence="2">
    <conflict type="erroneous initiation">
        <sequence resource="EMBL-CDS" id="AAL52055"/>
    </conflict>
</comment>
<reference key="1">
    <citation type="journal article" date="2002" name="Proc. Natl. Acad. Sci. U.S.A.">
        <title>The genome sequence of the facultative intracellular pathogen Brucella melitensis.</title>
        <authorList>
            <person name="DelVecchio V.G."/>
            <person name="Kapatral V."/>
            <person name="Redkar R.J."/>
            <person name="Patra G."/>
            <person name="Mujer C."/>
            <person name="Los T."/>
            <person name="Ivanova N."/>
            <person name="Anderson I."/>
            <person name="Bhattacharyya A."/>
            <person name="Lykidis A."/>
            <person name="Reznik G."/>
            <person name="Jablonski L."/>
            <person name="Larsen N."/>
            <person name="D'Souza M."/>
            <person name="Bernal A."/>
            <person name="Mazur M."/>
            <person name="Goltsman E."/>
            <person name="Selkov E."/>
            <person name="Elzer P.H."/>
            <person name="Hagius S."/>
            <person name="O'Callaghan D."/>
            <person name="Letesson J.-J."/>
            <person name="Haselkorn R."/>
            <person name="Kyrpides N.C."/>
            <person name="Overbeek R."/>
        </authorList>
    </citation>
    <scope>NUCLEOTIDE SEQUENCE [LARGE SCALE GENOMIC DNA]</scope>
    <source>
        <strain>ATCC 23456 / CCUG 17765 / NCTC 10094 / 16M</strain>
    </source>
</reference>
<keyword id="KW-0963">Cytoplasm</keyword>
<keyword id="KW-0378">Hydrolase</keyword>
<keyword id="KW-0645">Protease</keyword>
<keyword id="KW-0720">Serine protease</keyword>
<proteinExistence type="inferred from homology"/>
<protein>
    <recommendedName>
        <fullName evidence="1">ATP-dependent Clp protease proteolytic subunit</fullName>
        <ecNumber evidence="1">3.4.21.92</ecNumber>
    </recommendedName>
    <alternativeName>
        <fullName evidence="1">Endopeptidase Clp</fullName>
    </alternativeName>
</protein>
<evidence type="ECO:0000255" key="1">
    <source>
        <dbReference type="HAMAP-Rule" id="MF_00444"/>
    </source>
</evidence>
<evidence type="ECO:0000305" key="2"/>
<name>CLPP_BRUME</name>